<reference key="1">
    <citation type="submission" date="2004-06" db="EMBL/GenBank/DDBJ databases">
        <authorList>
            <person name="Birren B.W."/>
            <person name="Stange-Thomann N."/>
            <person name="Hafez N."/>
            <person name="DeCaprio D."/>
            <person name="Fisher S."/>
            <person name="Butler J."/>
            <person name="Elkins T."/>
            <person name="Kodira C.D."/>
            <person name="Major J."/>
            <person name="Wang S."/>
            <person name="Nicol R."/>
            <person name="Nusbaum C."/>
        </authorList>
    </citation>
    <scope>NUCLEOTIDE SEQUENCE [LARGE SCALE GENOMIC DNA]</scope>
    <source>
        <strain>ATCC 33453 / NBRC 100688 / NCTC 11704 / L1</strain>
    </source>
</reference>
<dbReference type="EMBL" id="AE017263">
    <property type="protein sequence ID" value="AAT75774.1"/>
    <property type="molecule type" value="Genomic_DNA"/>
</dbReference>
<dbReference type="RefSeq" id="WP_011183314.1">
    <property type="nucleotide sequence ID" value="NC_006055.1"/>
</dbReference>
<dbReference type="RefSeq" id="YP_053658.1">
    <property type="nucleotide sequence ID" value="NC_006055.1"/>
</dbReference>
<dbReference type="SMR" id="Q6F149"/>
<dbReference type="STRING" id="265311.Mfl415"/>
<dbReference type="PaxDb" id="265311-Mfl415"/>
<dbReference type="EnsemblBacteria" id="AAT75774">
    <property type="protein sequence ID" value="AAT75774"/>
    <property type="gene ID" value="Mfl415"/>
</dbReference>
<dbReference type="GeneID" id="2898222"/>
<dbReference type="KEGG" id="mfl:Mfl415"/>
<dbReference type="PATRIC" id="fig|265311.5.peg.416"/>
<dbReference type="eggNOG" id="COG0443">
    <property type="taxonomic scope" value="Bacteria"/>
</dbReference>
<dbReference type="HOGENOM" id="CLU_005965_2_4_14"/>
<dbReference type="OrthoDB" id="9766019at2"/>
<dbReference type="Proteomes" id="UP000006647">
    <property type="component" value="Chromosome"/>
</dbReference>
<dbReference type="GO" id="GO:0005524">
    <property type="term" value="F:ATP binding"/>
    <property type="evidence" value="ECO:0007669"/>
    <property type="project" value="UniProtKB-UniRule"/>
</dbReference>
<dbReference type="GO" id="GO:0140662">
    <property type="term" value="F:ATP-dependent protein folding chaperone"/>
    <property type="evidence" value="ECO:0007669"/>
    <property type="project" value="InterPro"/>
</dbReference>
<dbReference type="GO" id="GO:0051082">
    <property type="term" value="F:unfolded protein binding"/>
    <property type="evidence" value="ECO:0007669"/>
    <property type="project" value="InterPro"/>
</dbReference>
<dbReference type="CDD" id="cd10234">
    <property type="entry name" value="ASKHA_NBD_HSP70_DnaK-like"/>
    <property type="match status" value="1"/>
</dbReference>
<dbReference type="FunFam" id="2.60.34.10:FF:000014">
    <property type="entry name" value="Chaperone protein DnaK HSP70"/>
    <property type="match status" value="1"/>
</dbReference>
<dbReference type="FunFam" id="3.30.420.40:FF:000071">
    <property type="entry name" value="Molecular chaperone DnaK"/>
    <property type="match status" value="1"/>
</dbReference>
<dbReference type="FunFam" id="3.90.640.10:FF:000003">
    <property type="entry name" value="Molecular chaperone DnaK"/>
    <property type="match status" value="1"/>
</dbReference>
<dbReference type="Gene3D" id="3.30.420.40">
    <property type="match status" value="2"/>
</dbReference>
<dbReference type="Gene3D" id="3.90.640.10">
    <property type="entry name" value="Actin, Chain A, domain 4"/>
    <property type="match status" value="1"/>
</dbReference>
<dbReference type="Gene3D" id="2.60.34.10">
    <property type="entry name" value="Substrate Binding Domain Of DNAk, Chain A, domain 1"/>
    <property type="match status" value="1"/>
</dbReference>
<dbReference type="HAMAP" id="MF_00332">
    <property type="entry name" value="DnaK"/>
    <property type="match status" value="1"/>
</dbReference>
<dbReference type="InterPro" id="IPR043129">
    <property type="entry name" value="ATPase_NBD"/>
</dbReference>
<dbReference type="InterPro" id="IPR012725">
    <property type="entry name" value="Chaperone_DnaK"/>
</dbReference>
<dbReference type="InterPro" id="IPR018181">
    <property type="entry name" value="Heat_shock_70_CS"/>
</dbReference>
<dbReference type="InterPro" id="IPR029047">
    <property type="entry name" value="HSP70_peptide-bd_sf"/>
</dbReference>
<dbReference type="InterPro" id="IPR013126">
    <property type="entry name" value="Hsp_70_fam"/>
</dbReference>
<dbReference type="NCBIfam" id="NF001413">
    <property type="entry name" value="PRK00290.1"/>
    <property type="match status" value="1"/>
</dbReference>
<dbReference type="NCBIfam" id="TIGR02350">
    <property type="entry name" value="prok_dnaK"/>
    <property type="match status" value="1"/>
</dbReference>
<dbReference type="PANTHER" id="PTHR19375">
    <property type="entry name" value="HEAT SHOCK PROTEIN 70KDA"/>
    <property type="match status" value="1"/>
</dbReference>
<dbReference type="Pfam" id="PF00012">
    <property type="entry name" value="HSP70"/>
    <property type="match status" value="2"/>
</dbReference>
<dbReference type="PRINTS" id="PR00301">
    <property type="entry name" value="HEATSHOCK70"/>
</dbReference>
<dbReference type="SUPFAM" id="SSF53067">
    <property type="entry name" value="Actin-like ATPase domain"/>
    <property type="match status" value="2"/>
</dbReference>
<dbReference type="SUPFAM" id="SSF100920">
    <property type="entry name" value="Heat shock protein 70kD (HSP70), peptide-binding domain"/>
    <property type="match status" value="1"/>
</dbReference>
<dbReference type="PROSITE" id="PS00297">
    <property type="entry name" value="HSP70_1"/>
    <property type="match status" value="1"/>
</dbReference>
<dbReference type="PROSITE" id="PS00329">
    <property type="entry name" value="HSP70_2"/>
    <property type="match status" value="1"/>
</dbReference>
<dbReference type="PROSITE" id="PS01036">
    <property type="entry name" value="HSP70_3"/>
    <property type="match status" value="1"/>
</dbReference>
<gene>
    <name evidence="1" type="primary">dnaK</name>
    <name type="ordered locus">Mfl415</name>
</gene>
<accession>Q6F149</accession>
<keyword id="KW-0067">ATP-binding</keyword>
<keyword id="KW-0143">Chaperone</keyword>
<keyword id="KW-0547">Nucleotide-binding</keyword>
<keyword id="KW-0597">Phosphoprotein</keyword>
<keyword id="KW-1185">Reference proteome</keyword>
<keyword id="KW-0346">Stress response</keyword>
<proteinExistence type="inferred from homology"/>
<feature type="chain" id="PRO_0000225977" description="Chaperone protein DnaK">
    <location>
        <begin position="1"/>
        <end position="592"/>
    </location>
</feature>
<feature type="region of interest" description="Disordered" evidence="2">
    <location>
        <begin position="571"/>
        <end position="592"/>
    </location>
</feature>
<feature type="compositionally biased region" description="Polar residues" evidence="2">
    <location>
        <begin position="571"/>
        <end position="580"/>
    </location>
</feature>
<feature type="modified residue" description="Phosphothreonine; by autocatalysis" evidence="1">
    <location>
        <position position="175"/>
    </location>
</feature>
<protein>
    <recommendedName>
        <fullName evidence="1">Chaperone protein DnaK</fullName>
    </recommendedName>
    <alternativeName>
        <fullName evidence="1">HSP70</fullName>
    </alternativeName>
    <alternativeName>
        <fullName evidence="1">Heat shock 70 kDa protein</fullName>
    </alternativeName>
    <alternativeName>
        <fullName evidence="1">Heat shock protein 70</fullName>
    </alternativeName>
</protein>
<sequence>MAKERIIGIDLGTTNSVVSIMEGGQPIILENPEGQRTTPSVVAFKNEDIIVGGAAKRQAVTNPNVVISVKSKMGTNEKIDINGKKYTPEQISAEILRYMKKYAEEKVGEKITKAVITVPAYFNDSQRKATKDAGKIAGLDVERIINEPTAAALAYGLEKKDKEEKVLVYDLGGGTFDVSILELADGTFEVLSTSGDNKLGGDNFDTQIINWLIEKIKTESGVDLKNDKMALQRLKDEAEKAKINLSSQLEVEINLPFIAMNENGPVSFSTQFSRTEFDKITKDLVERTSKPVKDALQAAKLSASDIDEVLLVGGSTRIPAVQKIVKELLGKEPNRSINPDEVVAMGAAIQGGVLAGDVTDVLLLDVTPLSLGIETMGGVMTKLIDRNTTIPTEKSQIFSTAVDNQPAVDINVLQGERPMAADNKSLGQFQLTGIKPAPKGTPQIEVTFKIDVNGIVSVIAKDKATNEEKSITISNSGALSDADIEKMIKEAEANAEADEIKRKNIELKHKAESYVAIIESSLTQEGQEIPQEQKEQAEKMVAEVKELIEKEDYEALETKVNELEQMIQMASQFAQAQTAQPEEGNSDSEENK</sequence>
<evidence type="ECO:0000255" key="1">
    <source>
        <dbReference type="HAMAP-Rule" id="MF_00332"/>
    </source>
</evidence>
<evidence type="ECO:0000256" key="2">
    <source>
        <dbReference type="SAM" id="MobiDB-lite"/>
    </source>
</evidence>
<comment type="function">
    <text evidence="1">Acts as a chaperone.</text>
</comment>
<comment type="induction">
    <text evidence="1">By stress conditions e.g. heat shock.</text>
</comment>
<comment type="similarity">
    <text evidence="1">Belongs to the heat shock protein 70 family.</text>
</comment>
<name>DNAK_MESFL</name>
<organism>
    <name type="scientific">Mesoplasma florum (strain ATCC 33453 / NBRC 100688 / NCTC 11704 / L1)</name>
    <name type="common">Acholeplasma florum</name>
    <dbReference type="NCBI Taxonomy" id="265311"/>
    <lineage>
        <taxon>Bacteria</taxon>
        <taxon>Bacillati</taxon>
        <taxon>Mycoplasmatota</taxon>
        <taxon>Mollicutes</taxon>
        <taxon>Entomoplasmatales</taxon>
        <taxon>Entomoplasmataceae</taxon>
        <taxon>Mesoplasma</taxon>
    </lineage>
</organism>